<accession>A0Q1N5</accession>
<feature type="chain" id="PRO_1000076055" description="Deoxyuridine 5'-triphosphate nucleotidohydrolase">
    <location>
        <begin position="1"/>
        <end position="142"/>
    </location>
</feature>
<feature type="binding site" evidence="1">
    <location>
        <begin position="62"/>
        <end position="64"/>
    </location>
    <ligand>
        <name>substrate</name>
    </ligand>
</feature>
<feature type="binding site" evidence="1">
    <location>
        <position position="75"/>
    </location>
    <ligand>
        <name>substrate</name>
    </ligand>
</feature>
<feature type="binding site" evidence="1">
    <location>
        <begin position="79"/>
        <end position="81"/>
    </location>
    <ligand>
        <name>substrate</name>
    </ligand>
</feature>
<protein>
    <recommendedName>
        <fullName evidence="1">Deoxyuridine 5'-triphosphate nucleotidohydrolase</fullName>
        <shortName evidence="1">dUTPase</shortName>
        <ecNumber evidence="1">3.6.1.23</ecNumber>
    </recommendedName>
    <alternativeName>
        <fullName evidence="1">dUTP pyrophosphatase</fullName>
    </alternativeName>
</protein>
<dbReference type="EC" id="3.6.1.23" evidence="1"/>
<dbReference type="EMBL" id="CP000382">
    <property type="protein sequence ID" value="ABK62240.1"/>
    <property type="molecule type" value="Genomic_DNA"/>
</dbReference>
<dbReference type="RefSeq" id="WP_011722531.1">
    <property type="nucleotide sequence ID" value="NC_008593.1"/>
</dbReference>
<dbReference type="SMR" id="A0Q1N5"/>
<dbReference type="STRING" id="386415.NT01CX_0028"/>
<dbReference type="KEGG" id="cno:NT01CX_0028"/>
<dbReference type="PATRIC" id="fig|386415.7.peg.1568"/>
<dbReference type="eggNOG" id="COG0756">
    <property type="taxonomic scope" value="Bacteria"/>
</dbReference>
<dbReference type="HOGENOM" id="CLU_068508_1_2_9"/>
<dbReference type="UniPathway" id="UPA00610">
    <property type="reaction ID" value="UER00666"/>
</dbReference>
<dbReference type="Proteomes" id="UP000008220">
    <property type="component" value="Chromosome"/>
</dbReference>
<dbReference type="GO" id="GO:0004170">
    <property type="term" value="F:dUTP diphosphatase activity"/>
    <property type="evidence" value="ECO:0007669"/>
    <property type="project" value="UniProtKB-UniRule"/>
</dbReference>
<dbReference type="GO" id="GO:0000287">
    <property type="term" value="F:magnesium ion binding"/>
    <property type="evidence" value="ECO:0007669"/>
    <property type="project" value="UniProtKB-UniRule"/>
</dbReference>
<dbReference type="GO" id="GO:0006226">
    <property type="term" value="P:dUMP biosynthetic process"/>
    <property type="evidence" value="ECO:0007669"/>
    <property type="project" value="UniProtKB-UniRule"/>
</dbReference>
<dbReference type="GO" id="GO:0046081">
    <property type="term" value="P:dUTP catabolic process"/>
    <property type="evidence" value="ECO:0007669"/>
    <property type="project" value="InterPro"/>
</dbReference>
<dbReference type="CDD" id="cd07557">
    <property type="entry name" value="trimeric_dUTPase"/>
    <property type="match status" value="1"/>
</dbReference>
<dbReference type="Gene3D" id="2.70.40.10">
    <property type="match status" value="1"/>
</dbReference>
<dbReference type="HAMAP" id="MF_00116">
    <property type="entry name" value="dUTPase_bact"/>
    <property type="match status" value="1"/>
</dbReference>
<dbReference type="InterPro" id="IPR008181">
    <property type="entry name" value="dUTPase"/>
</dbReference>
<dbReference type="InterPro" id="IPR029054">
    <property type="entry name" value="dUTPase-like"/>
</dbReference>
<dbReference type="InterPro" id="IPR036157">
    <property type="entry name" value="dUTPase-like_sf"/>
</dbReference>
<dbReference type="InterPro" id="IPR033704">
    <property type="entry name" value="dUTPase_trimeric"/>
</dbReference>
<dbReference type="NCBIfam" id="TIGR00576">
    <property type="entry name" value="dut"/>
    <property type="match status" value="1"/>
</dbReference>
<dbReference type="NCBIfam" id="NF001862">
    <property type="entry name" value="PRK00601.1"/>
    <property type="match status" value="1"/>
</dbReference>
<dbReference type="PANTHER" id="PTHR11241">
    <property type="entry name" value="DEOXYURIDINE 5'-TRIPHOSPHATE NUCLEOTIDOHYDROLASE"/>
    <property type="match status" value="1"/>
</dbReference>
<dbReference type="PANTHER" id="PTHR11241:SF0">
    <property type="entry name" value="DEOXYURIDINE 5'-TRIPHOSPHATE NUCLEOTIDOHYDROLASE"/>
    <property type="match status" value="1"/>
</dbReference>
<dbReference type="Pfam" id="PF00692">
    <property type="entry name" value="dUTPase"/>
    <property type="match status" value="1"/>
</dbReference>
<dbReference type="SUPFAM" id="SSF51283">
    <property type="entry name" value="dUTPase-like"/>
    <property type="match status" value="1"/>
</dbReference>
<gene>
    <name evidence="1" type="primary">dut</name>
    <name type="ordered locus">NT01CX_0028</name>
</gene>
<comment type="function">
    <text evidence="1">This enzyme is involved in nucleotide metabolism: it produces dUMP, the immediate precursor of thymidine nucleotides and it decreases the intracellular concentration of dUTP so that uracil cannot be incorporated into DNA.</text>
</comment>
<comment type="catalytic activity">
    <reaction evidence="1">
        <text>dUTP + H2O = dUMP + diphosphate + H(+)</text>
        <dbReference type="Rhea" id="RHEA:10248"/>
        <dbReference type="ChEBI" id="CHEBI:15377"/>
        <dbReference type="ChEBI" id="CHEBI:15378"/>
        <dbReference type="ChEBI" id="CHEBI:33019"/>
        <dbReference type="ChEBI" id="CHEBI:61555"/>
        <dbReference type="ChEBI" id="CHEBI:246422"/>
        <dbReference type="EC" id="3.6.1.23"/>
    </reaction>
</comment>
<comment type="cofactor">
    <cofactor evidence="1">
        <name>Mg(2+)</name>
        <dbReference type="ChEBI" id="CHEBI:18420"/>
    </cofactor>
</comment>
<comment type="pathway">
    <text evidence="1">Pyrimidine metabolism; dUMP biosynthesis; dUMP from dCTP (dUTP route): step 2/2.</text>
</comment>
<comment type="similarity">
    <text evidence="1">Belongs to the dUTPase family.</text>
</comment>
<reference key="1">
    <citation type="journal article" date="2006" name="Nat. Biotechnol.">
        <title>The genome and transcriptomes of the anti-tumor agent Clostridium novyi-NT.</title>
        <authorList>
            <person name="Bettegowda C."/>
            <person name="Huang X."/>
            <person name="Lin J."/>
            <person name="Cheong I."/>
            <person name="Kohli M."/>
            <person name="Szabo S.A."/>
            <person name="Zhang X."/>
            <person name="Diaz L.A. Jr."/>
            <person name="Velculescu V.E."/>
            <person name="Parmigiani G."/>
            <person name="Kinzler K.W."/>
            <person name="Vogelstein B."/>
            <person name="Zhou S."/>
        </authorList>
    </citation>
    <scope>NUCLEOTIDE SEQUENCE [LARGE SCALE GENOMIC DNA]</scope>
    <source>
        <strain>NT</strain>
    </source>
</reference>
<name>DUT_CLONN</name>
<sequence>MKLLVEKTNEKAIIPFQAHEGDAGMDLFSVEEITLKPMERKLIHTGIKIQLPKDTEAQIRPRSGLALKHGITVLNTPGTIDEGYRGEIGIILINLGSEEFKVEEGMKIAQMVIKPTLTLKVEEVVELTETTRGENGFGSTGV</sequence>
<evidence type="ECO:0000255" key="1">
    <source>
        <dbReference type="HAMAP-Rule" id="MF_00116"/>
    </source>
</evidence>
<proteinExistence type="inferred from homology"/>
<organism>
    <name type="scientific">Clostridium novyi (strain NT)</name>
    <dbReference type="NCBI Taxonomy" id="386415"/>
    <lineage>
        <taxon>Bacteria</taxon>
        <taxon>Bacillati</taxon>
        <taxon>Bacillota</taxon>
        <taxon>Clostridia</taxon>
        <taxon>Eubacteriales</taxon>
        <taxon>Clostridiaceae</taxon>
        <taxon>Clostridium</taxon>
    </lineage>
</organism>
<keyword id="KW-0378">Hydrolase</keyword>
<keyword id="KW-0460">Magnesium</keyword>
<keyword id="KW-0479">Metal-binding</keyword>
<keyword id="KW-0546">Nucleotide metabolism</keyword>
<keyword id="KW-1185">Reference proteome</keyword>